<reference key="1">
    <citation type="journal article" date="2011" name="MBio">
        <title>Novel metabolic attributes of the genus Cyanothece, comprising a group of unicellular nitrogen-fixing Cyanobacteria.</title>
        <authorList>
            <person name="Bandyopadhyay A."/>
            <person name="Elvitigala T."/>
            <person name="Welsh E."/>
            <person name="Stockel J."/>
            <person name="Liberton M."/>
            <person name="Min H."/>
            <person name="Sherman L.A."/>
            <person name="Pakrasi H.B."/>
        </authorList>
    </citation>
    <scope>NUCLEOTIDE SEQUENCE [LARGE SCALE GENOMIC DNA]</scope>
    <source>
        <strain>PCC 7424</strain>
    </source>
</reference>
<evidence type="ECO:0000255" key="1">
    <source>
        <dbReference type="HAMAP-Rule" id="MF_01416"/>
    </source>
</evidence>
<comment type="function">
    <text evidence="1">F(1)F(0) ATP synthase produces ATP from ADP in the presence of a proton or sodium gradient. F-type ATPases consist of two structural domains, F(1) containing the extramembraneous catalytic core and F(0) containing the membrane proton channel, linked together by a central stalk and a peripheral stalk. During catalysis, ATP synthesis in the catalytic domain of F(1) is coupled via a rotary mechanism of the central stalk subunits to proton translocation.</text>
</comment>
<comment type="function">
    <text evidence="1">This protein is part of the stalk that links CF(0) to CF(1). It either transmits conformational changes from CF(0) to CF(1) or is implicated in proton conduction.</text>
</comment>
<comment type="subunit">
    <text evidence="1">F-type ATPases have 2 components, F(1) - the catalytic core - and F(0) - the membrane proton channel. F(1) has five subunits: alpha(3), beta(3), gamma(1), delta(1), epsilon(1). CF(0) has four main subunits: a(1), b(1), b'(1) and c(10-14). The alpha and beta chains form an alternating ring which encloses part of the gamma chain. F(1) is attached to F(0) by a central stalk formed by the gamma and epsilon chains, while a peripheral stalk is formed by the delta, b and b' chains.</text>
</comment>
<comment type="subcellular location">
    <subcellularLocation>
        <location evidence="1">Cellular thylakoid membrane</location>
        <topology evidence="1">Peripheral membrane protein</topology>
    </subcellularLocation>
</comment>
<comment type="similarity">
    <text evidence="1">Belongs to the ATPase delta chain family.</text>
</comment>
<keyword id="KW-0066">ATP synthesis</keyword>
<keyword id="KW-0139">CF(1)</keyword>
<keyword id="KW-0375">Hydrogen ion transport</keyword>
<keyword id="KW-0406">Ion transport</keyword>
<keyword id="KW-0472">Membrane</keyword>
<keyword id="KW-1185">Reference proteome</keyword>
<keyword id="KW-0793">Thylakoid</keyword>
<keyword id="KW-0813">Transport</keyword>
<protein>
    <recommendedName>
        <fullName evidence="1">ATP synthase subunit delta</fullName>
    </recommendedName>
    <alternativeName>
        <fullName evidence="1">ATP synthase F(1) sector subunit delta</fullName>
    </alternativeName>
    <alternativeName>
        <fullName evidence="1">F-type ATPase subunit delta</fullName>
        <shortName evidence="1">F-ATPase subunit delta</shortName>
    </alternativeName>
</protein>
<dbReference type="EMBL" id="CP001291">
    <property type="protein sequence ID" value="ACK71034.1"/>
    <property type="molecule type" value="Genomic_DNA"/>
</dbReference>
<dbReference type="RefSeq" id="WP_015954637.1">
    <property type="nucleotide sequence ID" value="NC_011729.1"/>
</dbReference>
<dbReference type="SMR" id="B7KKR5"/>
<dbReference type="STRING" id="65393.PCC7424_2620"/>
<dbReference type="KEGG" id="cyc:PCC7424_2620"/>
<dbReference type="eggNOG" id="COG0712">
    <property type="taxonomic scope" value="Bacteria"/>
</dbReference>
<dbReference type="HOGENOM" id="CLU_085114_4_0_3"/>
<dbReference type="OrthoDB" id="9802471at2"/>
<dbReference type="Proteomes" id="UP000002384">
    <property type="component" value="Chromosome"/>
</dbReference>
<dbReference type="GO" id="GO:0031676">
    <property type="term" value="C:plasma membrane-derived thylakoid membrane"/>
    <property type="evidence" value="ECO:0007669"/>
    <property type="project" value="UniProtKB-SubCell"/>
</dbReference>
<dbReference type="GO" id="GO:0045259">
    <property type="term" value="C:proton-transporting ATP synthase complex"/>
    <property type="evidence" value="ECO:0007669"/>
    <property type="project" value="UniProtKB-KW"/>
</dbReference>
<dbReference type="GO" id="GO:0046933">
    <property type="term" value="F:proton-transporting ATP synthase activity, rotational mechanism"/>
    <property type="evidence" value="ECO:0007669"/>
    <property type="project" value="UniProtKB-UniRule"/>
</dbReference>
<dbReference type="Gene3D" id="1.10.520.20">
    <property type="entry name" value="N-terminal domain of the delta subunit of the F1F0-ATP synthase"/>
    <property type="match status" value="1"/>
</dbReference>
<dbReference type="HAMAP" id="MF_01416">
    <property type="entry name" value="ATP_synth_delta_bact"/>
    <property type="match status" value="1"/>
</dbReference>
<dbReference type="InterPro" id="IPR026015">
    <property type="entry name" value="ATP_synth_OSCP/delta_N_sf"/>
</dbReference>
<dbReference type="InterPro" id="IPR020781">
    <property type="entry name" value="ATPase_OSCP/d_CS"/>
</dbReference>
<dbReference type="InterPro" id="IPR000711">
    <property type="entry name" value="ATPase_OSCP/dsu"/>
</dbReference>
<dbReference type="NCBIfam" id="TIGR01145">
    <property type="entry name" value="ATP_synt_delta"/>
    <property type="match status" value="1"/>
</dbReference>
<dbReference type="PANTHER" id="PTHR11910">
    <property type="entry name" value="ATP SYNTHASE DELTA CHAIN"/>
    <property type="match status" value="1"/>
</dbReference>
<dbReference type="Pfam" id="PF00213">
    <property type="entry name" value="OSCP"/>
    <property type="match status" value="1"/>
</dbReference>
<dbReference type="PRINTS" id="PR00125">
    <property type="entry name" value="ATPASEDELTA"/>
</dbReference>
<dbReference type="SUPFAM" id="SSF47928">
    <property type="entry name" value="N-terminal domain of the delta subunit of the F1F0-ATP synthase"/>
    <property type="match status" value="1"/>
</dbReference>
<dbReference type="PROSITE" id="PS00389">
    <property type="entry name" value="ATPASE_DELTA"/>
    <property type="match status" value="1"/>
</dbReference>
<feature type="chain" id="PRO_0000370956" description="ATP synthase subunit delta">
    <location>
        <begin position="1"/>
        <end position="184"/>
    </location>
</feature>
<accession>B7KKR5</accession>
<proteinExistence type="inferred from homology"/>
<sequence>MKGSSLSLEIAEPYAQALMSVSQSNNLTERFGEDIRSLLDLLNNSPELREFLSNPVIREENKKEILQRIMGDQTHPYLRNFLMLLVDKRRIAFLEQVCEQYLALLRQLTNTVLAEVVSATELNDEQRQSVIDKVKTISGAQAVELKASINPDLIGGVIIKIGSQILDASIRGQLRRISLSLGGV</sequence>
<organism>
    <name type="scientific">Gloeothece citriformis (strain PCC 7424)</name>
    <name type="common">Cyanothece sp. (strain PCC 7424)</name>
    <dbReference type="NCBI Taxonomy" id="65393"/>
    <lineage>
        <taxon>Bacteria</taxon>
        <taxon>Bacillati</taxon>
        <taxon>Cyanobacteriota</taxon>
        <taxon>Cyanophyceae</taxon>
        <taxon>Oscillatoriophycideae</taxon>
        <taxon>Chroococcales</taxon>
        <taxon>Aphanothecaceae</taxon>
        <taxon>Gloeothece</taxon>
        <taxon>Gloeothece citriformis</taxon>
    </lineage>
</organism>
<name>ATPD_GLOC7</name>
<gene>
    <name evidence="1" type="primary">atpH</name>
    <name evidence="1" type="synonym">atpD</name>
    <name type="ordered locus">PCC7424_2620</name>
</gene>